<gene>
    <name type="primary">LCR85</name>
    <name type="ordered locus">At4g22210</name>
    <name type="ORF">T10I14.12</name>
</gene>
<sequence length="86" mass="9086">MGSLRVSTFAVAVVVCLSILLMSPTDGRRVCDSAAGLCSMLFSCNTQCNSLGRNFTGGECSDARFPGLSVCYCCHNVESSAEMESM</sequence>
<organism evidence="3">
    <name type="scientific">Arabidopsis thaliana</name>
    <name type="common">Mouse-ear cress</name>
    <dbReference type="NCBI Taxonomy" id="3702"/>
    <lineage>
        <taxon>Eukaryota</taxon>
        <taxon>Viridiplantae</taxon>
        <taxon>Streptophyta</taxon>
        <taxon>Embryophyta</taxon>
        <taxon>Tracheophyta</taxon>
        <taxon>Spermatophyta</taxon>
        <taxon>Magnoliopsida</taxon>
        <taxon>eudicotyledons</taxon>
        <taxon>Gunneridae</taxon>
        <taxon>Pentapetalae</taxon>
        <taxon>rosids</taxon>
        <taxon>malvids</taxon>
        <taxon>Brassicales</taxon>
        <taxon>Brassicaceae</taxon>
        <taxon>Camelineae</taxon>
        <taxon>Arabidopsis</taxon>
    </lineage>
</organism>
<proteinExistence type="inferred from homology"/>
<protein>
    <recommendedName>
        <fullName>Defensin-like protein 97</fullName>
    </recommendedName>
    <alternativeName>
        <fullName>Low-molecular-weight cysteine-rich protein 85</fullName>
        <shortName>Protein LCR85</shortName>
    </alternativeName>
</protein>
<feature type="signal peptide" evidence="2">
    <location>
        <begin position="1"/>
        <end position="27"/>
    </location>
</feature>
<feature type="chain" id="PRO_0000017309" description="Defensin-like protein 97">
    <location>
        <begin position="28"/>
        <end position="86"/>
    </location>
</feature>
<feature type="disulfide bond" evidence="1">
    <location>
        <begin position="31"/>
        <end position="74"/>
    </location>
</feature>
<feature type="disulfide bond" evidence="1">
    <location>
        <begin position="38"/>
        <end position="60"/>
    </location>
</feature>
<feature type="disulfide bond" evidence="1">
    <location>
        <begin position="44"/>
        <end position="71"/>
    </location>
</feature>
<feature type="disulfide bond" evidence="1">
    <location>
        <begin position="48"/>
        <end position="73"/>
    </location>
</feature>
<dbReference type="EMBL" id="AL021712">
    <property type="protein sequence ID" value="CAA16771.1"/>
    <property type="status" value="ALT_SEQ"/>
    <property type="molecule type" value="Genomic_DNA"/>
</dbReference>
<dbReference type="EMBL" id="AL161556">
    <property type="protein sequence ID" value="CAB79176.1"/>
    <property type="status" value="ALT_SEQ"/>
    <property type="molecule type" value="Genomic_DNA"/>
</dbReference>
<dbReference type="EMBL" id="CP002687">
    <property type="protein sequence ID" value="AEE84572.1"/>
    <property type="molecule type" value="Genomic_DNA"/>
</dbReference>
<dbReference type="EMBL" id="DQ446859">
    <property type="protein sequence ID" value="ABE66083.1"/>
    <property type="molecule type" value="mRNA"/>
</dbReference>
<dbReference type="EMBL" id="EF182819">
    <property type="status" value="NOT_ANNOTATED_CDS"/>
    <property type="molecule type" value="mRNA"/>
</dbReference>
<dbReference type="PIR" id="T04902">
    <property type="entry name" value="T04902"/>
</dbReference>
<dbReference type="RefSeq" id="NP_567652.1">
    <property type="nucleotide sequence ID" value="NM_118343.2"/>
</dbReference>
<dbReference type="SMR" id="P82794"/>
<dbReference type="STRING" id="3702.P82794"/>
<dbReference type="PaxDb" id="3702-AT4G22210.1"/>
<dbReference type="EnsemblPlants" id="AT4G22210.1">
    <property type="protein sequence ID" value="AT4G22210.1"/>
    <property type="gene ID" value="AT4G22210"/>
</dbReference>
<dbReference type="GeneID" id="828312"/>
<dbReference type="Gramene" id="AT4G22210.1">
    <property type="protein sequence ID" value="AT4G22210.1"/>
    <property type="gene ID" value="AT4G22210"/>
</dbReference>
<dbReference type="KEGG" id="ath:AT4G22210"/>
<dbReference type="Araport" id="AT4G22210"/>
<dbReference type="TAIR" id="AT4G22210">
    <property type="gene designation" value="LCR85"/>
</dbReference>
<dbReference type="HOGENOM" id="CLU_2416305_0_0_1"/>
<dbReference type="InParanoid" id="P82794"/>
<dbReference type="PhylomeDB" id="P82794"/>
<dbReference type="PRO" id="PR:P82794"/>
<dbReference type="Proteomes" id="UP000006548">
    <property type="component" value="Chromosome 4"/>
</dbReference>
<dbReference type="ExpressionAtlas" id="P82794">
    <property type="expression patterns" value="baseline and differential"/>
</dbReference>
<dbReference type="GO" id="GO:0005576">
    <property type="term" value="C:extracellular region"/>
    <property type="evidence" value="ECO:0007669"/>
    <property type="project" value="UniProtKB-SubCell"/>
</dbReference>
<dbReference type="GO" id="GO:0050832">
    <property type="term" value="P:defense response to fungus"/>
    <property type="evidence" value="ECO:0007669"/>
    <property type="project" value="UniProtKB-KW"/>
</dbReference>
<dbReference type="GO" id="GO:0031640">
    <property type="term" value="P:killing of cells of another organism"/>
    <property type="evidence" value="ECO:0007669"/>
    <property type="project" value="UniProtKB-KW"/>
</dbReference>
<comment type="subcellular location">
    <subcellularLocation>
        <location evidence="1">Secreted</location>
    </subcellularLocation>
</comment>
<comment type="similarity">
    <text evidence="3">Belongs to the DEFL family.</text>
</comment>
<comment type="sequence caution" evidence="3">
    <conflict type="erroneous gene model prediction">
        <sequence resource="EMBL-CDS" id="CAA16771"/>
    </conflict>
    <text>The predicted gene has been split into 4 genes: At4g22210, At4g22212, At4g22214 and At4g22217.</text>
</comment>
<comment type="sequence caution" evidence="3">
    <conflict type="erroneous gene model prediction">
        <sequence resource="EMBL-CDS" id="CAB79176"/>
    </conflict>
    <text>The predicted gene has been split into 4 genes: At4g22210, At4g22212, At4g22214 and At4g22217.</text>
</comment>
<name>DEF97_ARATH</name>
<reference evidence="3" key="1">
    <citation type="journal article" date="1999" name="Nature">
        <title>Sequence and analysis of chromosome 4 of the plant Arabidopsis thaliana.</title>
        <authorList>
            <person name="Mayer K.F.X."/>
            <person name="Schueller C."/>
            <person name="Wambutt R."/>
            <person name="Murphy G."/>
            <person name="Volckaert G."/>
            <person name="Pohl T."/>
            <person name="Duesterhoeft A."/>
            <person name="Stiekema W."/>
            <person name="Entian K.-D."/>
            <person name="Terryn N."/>
            <person name="Harris B."/>
            <person name="Ansorge W."/>
            <person name="Brandt P."/>
            <person name="Grivell L.A."/>
            <person name="Rieger M."/>
            <person name="Weichselgartner M."/>
            <person name="de Simone V."/>
            <person name="Obermaier B."/>
            <person name="Mache R."/>
            <person name="Mueller M."/>
            <person name="Kreis M."/>
            <person name="Delseny M."/>
            <person name="Puigdomenech P."/>
            <person name="Watson M."/>
            <person name="Schmidtheini T."/>
            <person name="Reichert B."/>
            <person name="Portetelle D."/>
            <person name="Perez-Alonso M."/>
            <person name="Boutry M."/>
            <person name="Bancroft I."/>
            <person name="Vos P."/>
            <person name="Hoheisel J."/>
            <person name="Zimmermann W."/>
            <person name="Wedler H."/>
            <person name="Ridley P."/>
            <person name="Langham S.-A."/>
            <person name="McCullagh B."/>
            <person name="Bilham L."/>
            <person name="Robben J."/>
            <person name="van der Schueren J."/>
            <person name="Grymonprez B."/>
            <person name="Chuang Y.-J."/>
            <person name="Vandenbussche F."/>
            <person name="Braeken M."/>
            <person name="Weltjens I."/>
            <person name="Voet M."/>
            <person name="Bastiaens I."/>
            <person name="Aert R."/>
            <person name="Defoor E."/>
            <person name="Weitzenegger T."/>
            <person name="Bothe G."/>
            <person name="Ramsperger U."/>
            <person name="Hilbert H."/>
            <person name="Braun M."/>
            <person name="Holzer E."/>
            <person name="Brandt A."/>
            <person name="Peters S."/>
            <person name="van Staveren M."/>
            <person name="Dirkse W."/>
            <person name="Mooijman P."/>
            <person name="Klein Lankhorst R."/>
            <person name="Rose M."/>
            <person name="Hauf J."/>
            <person name="Koetter P."/>
            <person name="Berneiser S."/>
            <person name="Hempel S."/>
            <person name="Feldpausch M."/>
            <person name="Lamberth S."/>
            <person name="Van den Daele H."/>
            <person name="De Keyser A."/>
            <person name="Buysshaert C."/>
            <person name="Gielen J."/>
            <person name="Villarroel R."/>
            <person name="De Clercq R."/>
            <person name="van Montagu M."/>
            <person name="Rogers J."/>
            <person name="Cronin A."/>
            <person name="Quail M.A."/>
            <person name="Bray-Allen S."/>
            <person name="Clark L."/>
            <person name="Doggett J."/>
            <person name="Hall S."/>
            <person name="Kay M."/>
            <person name="Lennard N."/>
            <person name="McLay K."/>
            <person name="Mayes R."/>
            <person name="Pettett A."/>
            <person name="Rajandream M.A."/>
            <person name="Lyne M."/>
            <person name="Benes V."/>
            <person name="Rechmann S."/>
            <person name="Borkova D."/>
            <person name="Bloecker H."/>
            <person name="Scharfe M."/>
            <person name="Grimm M."/>
            <person name="Loehnert T.-H."/>
            <person name="Dose S."/>
            <person name="de Haan M."/>
            <person name="Maarse A.C."/>
            <person name="Schaefer M."/>
            <person name="Mueller-Auer S."/>
            <person name="Gabel C."/>
            <person name="Fuchs M."/>
            <person name="Fartmann B."/>
            <person name="Granderath K."/>
            <person name="Dauner D."/>
            <person name="Herzl A."/>
            <person name="Neumann S."/>
            <person name="Argiriou A."/>
            <person name="Vitale D."/>
            <person name="Liguori R."/>
            <person name="Piravandi E."/>
            <person name="Massenet O."/>
            <person name="Quigley F."/>
            <person name="Clabauld G."/>
            <person name="Muendlein A."/>
            <person name="Felber R."/>
            <person name="Schnabl S."/>
            <person name="Hiller R."/>
            <person name="Schmidt W."/>
            <person name="Lecharny A."/>
            <person name="Aubourg S."/>
            <person name="Chefdor F."/>
            <person name="Cooke R."/>
            <person name="Berger C."/>
            <person name="Monfort A."/>
            <person name="Casacuberta E."/>
            <person name="Gibbons T."/>
            <person name="Weber N."/>
            <person name="Vandenbol M."/>
            <person name="Bargues M."/>
            <person name="Terol J."/>
            <person name="Torres A."/>
            <person name="Perez-Perez A."/>
            <person name="Purnelle B."/>
            <person name="Bent E."/>
            <person name="Johnson S."/>
            <person name="Tacon D."/>
            <person name="Jesse T."/>
            <person name="Heijnen L."/>
            <person name="Schwarz S."/>
            <person name="Scholler P."/>
            <person name="Heber S."/>
            <person name="Francs P."/>
            <person name="Bielke C."/>
            <person name="Frishman D."/>
            <person name="Haase D."/>
            <person name="Lemcke K."/>
            <person name="Mewes H.-W."/>
            <person name="Stocker S."/>
            <person name="Zaccaria P."/>
            <person name="Bevan M."/>
            <person name="Wilson R.K."/>
            <person name="de la Bastide M."/>
            <person name="Habermann K."/>
            <person name="Parnell L."/>
            <person name="Dedhia N."/>
            <person name="Gnoj L."/>
            <person name="Schutz K."/>
            <person name="Huang E."/>
            <person name="Spiegel L."/>
            <person name="Sekhon M."/>
            <person name="Murray J."/>
            <person name="Sheet P."/>
            <person name="Cordes M."/>
            <person name="Abu-Threideh J."/>
            <person name="Stoneking T."/>
            <person name="Kalicki J."/>
            <person name="Graves T."/>
            <person name="Harmon G."/>
            <person name="Edwards J."/>
            <person name="Latreille P."/>
            <person name="Courtney L."/>
            <person name="Cloud J."/>
            <person name="Abbott A."/>
            <person name="Scott K."/>
            <person name="Johnson D."/>
            <person name="Minx P."/>
            <person name="Bentley D."/>
            <person name="Fulton B."/>
            <person name="Miller N."/>
            <person name="Greco T."/>
            <person name="Kemp K."/>
            <person name="Kramer J."/>
            <person name="Fulton L."/>
            <person name="Mardis E."/>
            <person name="Dante M."/>
            <person name="Pepin K."/>
            <person name="Hillier L.W."/>
            <person name="Nelson J."/>
            <person name="Spieth J."/>
            <person name="Ryan E."/>
            <person name="Andrews S."/>
            <person name="Geisel C."/>
            <person name="Layman D."/>
            <person name="Du H."/>
            <person name="Ali J."/>
            <person name="Berghoff A."/>
            <person name="Jones K."/>
            <person name="Drone K."/>
            <person name="Cotton M."/>
            <person name="Joshu C."/>
            <person name="Antonoiu B."/>
            <person name="Zidanic M."/>
            <person name="Strong C."/>
            <person name="Sun H."/>
            <person name="Lamar B."/>
            <person name="Yordan C."/>
            <person name="Ma P."/>
            <person name="Zhong J."/>
            <person name="Preston R."/>
            <person name="Vil D."/>
            <person name="Shekher M."/>
            <person name="Matero A."/>
            <person name="Shah R."/>
            <person name="Swaby I.K."/>
            <person name="O'Shaughnessy A."/>
            <person name="Rodriguez M."/>
            <person name="Hoffman J."/>
            <person name="Till S."/>
            <person name="Granat S."/>
            <person name="Shohdy N."/>
            <person name="Hasegawa A."/>
            <person name="Hameed A."/>
            <person name="Lodhi M."/>
            <person name="Johnson A."/>
            <person name="Chen E."/>
            <person name="Marra M.A."/>
            <person name="Martienssen R."/>
            <person name="McCombie W.R."/>
        </authorList>
    </citation>
    <scope>NUCLEOTIDE SEQUENCE [LARGE SCALE GENOMIC DNA]</scope>
    <source>
        <strain>cv. Columbia</strain>
    </source>
</reference>
<reference key="2">
    <citation type="journal article" date="2017" name="Plant J.">
        <title>Araport11: a complete reannotation of the Arabidopsis thaliana reference genome.</title>
        <authorList>
            <person name="Cheng C.Y."/>
            <person name="Krishnakumar V."/>
            <person name="Chan A.P."/>
            <person name="Thibaud-Nissen F."/>
            <person name="Schobel S."/>
            <person name="Town C.D."/>
        </authorList>
    </citation>
    <scope>GENOME REANNOTATION</scope>
    <source>
        <strain>cv. Columbia</strain>
    </source>
</reference>
<reference key="3">
    <citation type="journal article" date="2006" name="Plant Biotechnol. J.">
        <title>Simultaneous high-throughput recombinational cloning of open reading frames in closed and open configurations.</title>
        <authorList>
            <person name="Underwood B.A."/>
            <person name="Vanderhaeghen R."/>
            <person name="Whitford R."/>
            <person name="Town C.D."/>
            <person name="Hilson P."/>
        </authorList>
    </citation>
    <scope>NUCLEOTIDE SEQUENCE [LARGE SCALE MRNA]</scope>
    <source>
        <strain>cv. Columbia</strain>
    </source>
</reference>
<reference key="4">
    <citation type="journal article" date="2007" name="Plant J.">
        <title>Small cysteine-rich peptides resembling antimicrobial peptides have been under-predicted in plants.</title>
        <authorList>
            <person name="Silverstein K.A.T."/>
            <person name="Moskal W.A. Jr."/>
            <person name="Wu H.C."/>
            <person name="Underwood B.A."/>
            <person name="Graham M.A."/>
            <person name="Town C.D."/>
            <person name="VandenBosch K.A."/>
        </authorList>
    </citation>
    <scope>NUCLEOTIDE SEQUENCE [LARGE SCALE MRNA]</scope>
    <source>
        <strain>cv. Columbia</strain>
    </source>
</reference>
<reference evidence="3" key="5">
    <citation type="journal article" date="2001" name="Plant Mol. Biol.">
        <title>Two large Arabidopsis thaliana gene families are homologous to the Brassica gene superfamily that encodes pollen coat proteins and the male component of the self-incompatibility response.</title>
        <authorList>
            <person name="Vanoosthuyse V."/>
            <person name="Miege C."/>
            <person name="Dumas C."/>
            <person name="Cock J.M."/>
        </authorList>
    </citation>
    <scope>IDENTIFICATION</scope>
</reference>
<reference key="6">
    <citation type="journal article" date="2005" name="Plant Physiol.">
        <title>Genome organization of more than 300 defensin-like genes in Arabidopsis.</title>
        <authorList>
            <person name="Silverstein K.A.T."/>
            <person name="Graham M.A."/>
            <person name="Paape T.D."/>
            <person name="VandenBosch K.A."/>
        </authorList>
    </citation>
    <scope>GENE FAMILY</scope>
</reference>
<accession>P82794</accession>
<accession>O49626</accession>
<accession>Q1PE59</accession>
<evidence type="ECO:0000250" key="1"/>
<evidence type="ECO:0000255" key="2"/>
<evidence type="ECO:0000305" key="3"/>
<keyword id="KW-0929">Antimicrobial</keyword>
<keyword id="KW-1015">Disulfide bond</keyword>
<keyword id="KW-0295">Fungicide</keyword>
<keyword id="KW-0611">Plant defense</keyword>
<keyword id="KW-1185">Reference proteome</keyword>
<keyword id="KW-0964">Secreted</keyword>
<keyword id="KW-0732">Signal</keyword>